<protein>
    <recommendedName>
        <fullName evidence="1">Bifunctional protein FolD</fullName>
    </recommendedName>
    <alternativeName>
        <fullName>PPDC</fullName>
    </alternativeName>
    <domain>
        <recommendedName>
            <fullName evidence="1">Methylenetetrahydrofolate dehydrogenase</fullName>
            <ecNumber evidence="1">1.5.1.5</ecNumber>
        </recommendedName>
    </domain>
    <domain>
        <recommendedName>
            <fullName evidence="1">Methenyltetrahydrofolate cyclohydrolase</fullName>
            <ecNumber evidence="1">3.5.4.9</ecNumber>
        </recommendedName>
    </domain>
</protein>
<feature type="chain" id="PRO_0000199312" description="Bifunctional protein FolD">
    <location>
        <begin position="1"/>
        <end position="285"/>
    </location>
</feature>
<feature type="binding site" evidence="1">
    <location>
        <begin position="166"/>
        <end position="168"/>
    </location>
    <ligand>
        <name>NADP(+)</name>
        <dbReference type="ChEBI" id="CHEBI:58349"/>
    </ligand>
</feature>
<feature type="binding site" evidence="1">
    <location>
        <position position="232"/>
    </location>
    <ligand>
        <name>NADP(+)</name>
        <dbReference type="ChEBI" id="CHEBI:58349"/>
    </ligand>
</feature>
<dbReference type="EC" id="1.5.1.5" evidence="1"/>
<dbReference type="EC" id="3.5.4.9" evidence="1"/>
<dbReference type="EMBL" id="U34207">
    <property type="protein sequence ID" value="AAA98507.1"/>
    <property type="molecule type" value="Genomic_DNA"/>
</dbReference>
<dbReference type="PIR" id="S71924">
    <property type="entry name" value="S71924"/>
</dbReference>
<dbReference type="SMR" id="P51696"/>
<dbReference type="STRING" id="659.AYY26_02810"/>
<dbReference type="SABIO-RK" id="P51696"/>
<dbReference type="UniPathway" id="UPA00193"/>
<dbReference type="GO" id="GO:0005829">
    <property type="term" value="C:cytosol"/>
    <property type="evidence" value="ECO:0007669"/>
    <property type="project" value="TreeGrafter"/>
</dbReference>
<dbReference type="GO" id="GO:0004477">
    <property type="term" value="F:methenyltetrahydrofolate cyclohydrolase activity"/>
    <property type="evidence" value="ECO:0007669"/>
    <property type="project" value="UniProtKB-UniRule"/>
</dbReference>
<dbReference type="GO" id="GO:0004488">
    <property type="term" value="F:methylenetetrahydrofolate dehydrogenase (NADP+) activity"/>
    <property type="evidence" value="ECO:0007669"/>
    <property type="project" value="UniProtKB-UniRule"/>
</dbReference>
<dbReference type="GO" id="GO:0000105">
    <property type="term" value="P:L-histidine biosynthetic process"/>
    <property type="evidence" value="ECO:0007669"/>
    <property type="project" value="UniProtKB-KW"/>
</dbReference>
<dbReference type="GO" id="GO:0009086">
    <property type="term" value="P:methionine biosynthetic process"/>
    <property type="evidence" value="ECO:0007669"/>
    <property type="project" value="UniProtKB-KW"/>
</dbReference>
<dbReference type="GO" id="GO:0006164">
    <property type="term" value="P:purine nucleotide biosynthetic process"/>
    <property type="evidence" value="ECO:0007669"/>
    <property type="project" value="UniProtKB-KW"/>
</dbReference>
<dbReference type="GO" id="GO:0035999">
    <property type="term" value="P:tetrahydrofolate interconversion"/>
    <property type="evidence" value="ECO:0007669"/>
    <property type="project" value="UniProtKB-UniRule"/>
</dbReference>
<dbReference type="CDD" id="cd01080">
    <property type="entry name" value="NAD_bind_m-THF_DH_Cyclohyd"/>
    <property type="match status" value="1"/>
</dbReference>
<dbReference type="FunFam" id="3.40.50.10860:FF:000001">
    <property type="entry name" value="Bifunctional protein FolD"/>
    <property type="match status" value="1"/>
</dbReference>
<dbReference type="FunFam" id="3.40.50.720:FF:000006">
    <property type="entry name" value="Bifunctional protein FolD"/>
    <property type="match status" value="1"/>
</dbReference>
<dbReference type="Gene3D" id="3.40.50.10860">
    <property type="entry name" value="Leucine Dehydrogenase, chain A, domain 1"/>
    <property type="match status" value="1"/>
</dbReference>
<dbReference type="Gene3D" id="3.40.50.720">
    <property type="entry name" value="NAD(P)-binding Rossmann-like Domain"/>
    <property type="match status" value="1"/>
</dbReference>
<dbReference type="HAMAP" id="MF_01576">
    <property type="entry name" value="THF_DHG_CYH"/>
    <property type="match status" value="1"/>
</dbReference>
<dbReference type="InterPro" id="IPR046346">
    <property type="entry name" value="Aminoacid_DH-like_N_sf"/>
</dbReference>
<dbReference type="InterPro" id="IPR036291">
    <property type="entry name" value="NAD(P)-bd_dom_sf"/>
</dbReference>
<dbReference type="InterPro" id="IPR000672">
    <property type="entry name" value="THF_DH/CycHdrlase"/>
</dbReference>
<dbReference type="InterPro" id="IPR020630">
    <property type="entry name" value="THF_DH/CycHdrlase_cat_dom"/>
</dbReference>
<dbReference type="InterPro" id="IPR020867">
    <property type="entry name" value="THF_DH/CycHdrlase_CS"/>
</dbReference>
<dbReference type="InterPro" id="IPR020631">
    <property type="entry name" value="THF_DH/CycHdrlase_NAD-bd_dom"/>
</dbReference>
<dbReference type="NCBIfam" id="NF008058">
    <property type="entry name" value="PRK10792.1"/>
    <property type="match status" value="1"/>
</dbReference>
<dbReference type="NCBIfam" id="NF010783">
    <property type="entry name" value="PRK14186.1"/>
    <property type="match status" value="1"/>
</dbReference>
<dbReference type="PANTHER" id="PTHR48099:SF5">
    <property type="entry name" value="C-1-TETRAHYDROFOLATE SYNTHASE, CYTOPLASMIC"/>
    <property type="match status" value="1"/>
</dbReference>
<dbReference type="PANTHER" id="PTHR48099">
    <property type="entry name" value="C-1-TETRAHYDROFOLATE SYNTHASE, CYTOPLASMIC-RELATED"/>
    <property type="match status" value="1"/>
</dbReference>
<dbReference type="Pfam" id="PF00763">
    <property type="entry name" value="THF_DHG_CYH"/>
    <property type="match status" value="1"/>
</dbReference>
<dbReference type="Pfam" id="PF02882">
    <property type="entry name" value="THF_DHG_CYH_C"/>
    <property type="match status" value="1"/>
</dbReference>
<dbReference type="PRINTS" id="PR00085">
    <property type="entry name" value="THFDHDRGNASE"/>
</dbReference>
<dbReference type="SUPFAM" id="SSF53223">
    <property type="entry name" value="Aminoacid dehydrogenase-like, N-terminal domain"/>
    <property type="match status" value="1"/>
</dbReference>
<dbReference type="SUPFAM" id="SSF51735">
    <property type="entry name" value="NAD(P)-binding Rossmann-fold domains"/>
    <property type="match status" value="1"/>
</dbReference>
<dbReference type="PROSITE" id="PS00766">
    <property type="entry name" value="THF_DHG_CYH_1"/>
    <property type="match status" value="1"/>
</dbReference>
<dbReference type="PROSITE" id="PS00767">
    <property type="entry name" value="THF_DHG_CYH_2"/>
    <property type="match status" value="1"/>
</dbReference>
<gene>
    <name evidence="1" type="primary">folD</name>
</gene>
<organism>
    <name type="scientific">Photobacterium phosphoreum</name>
    <dbReference type="NCBI Taxonomy" id="659"/>
    <lineage>
        <taxon>Bacteria</taxon>
        <taxon>Pseudomonadati</taxon>
        <taxon>Pseudomonadota</taxon>
        <taxon>Gammaproteobacteria</taxon>
        <taxon>Vibrionales</taxon>
        <taxon>Vibrionaceae</taxon>
        <taxon>Photobacterium</taxon>
    </lineage>
</organism>
<comment type="function">
    <text>Catalyzes the oxidation of 5,10-methylenetetrahydrofolate to 5,10-methenyltetrahydrofolate and then the hydrolysis of 5,10-methenyltetrahydrofolate to 10-formyltetrahydrofolate.</text>
</comment>
<comment type="catalytic activity">
    <reaction evidence="1">
        <text>(6R)-5,10-methylene-5,6,7,8-tetrahydrofolate + NADP(+) = (6R)-5,10-methenyltetrahydrofolate + NADPH</text>
        <dbReference type="Rhea" id="RHEA:22812"/>
        <dbReference type="ChEBI" id="CHEBI:15636"/>
        <dbReference type="ChEBI" id="CHEBI:57455"/>
        <dbReference type="ChEBI" id="CHEBI:57783"/>
        <dbReference type="ChEBI" id="CHEBI:58349"/>
        <dbReference type="EC" id="1.5.1.5"/>
    </reaction>
</comment>
<comment type="catalytic activity">
    <reaction evidence="1">
        <text>(6R)-5,10-methenyltetrahydrofolate + H2O = (6R)-10-formyltetrahydrofolate + H(+)</text>
        <dbReference type="Rhea" id="RHEA:23700"/>
        <dbReference type="ChEBI" id="CHEBI:15377"/>
        <dbReference type="ChEBI" id="CHEBI:15378"/>
        <dbReference type="ChEBI" id="CHEBI:57455"/>
        <dbReference type="ChEBI" id="CHEBI:195366"/>
        <dbReference type="EC" id="3.5.4.9"/>
    </reaction>
</comment>
<comment type="activity regulation">
    <text>The NAD(+)-dependent dehydrogenase is activated by inorganic phosphate.</text>
</comment>
<comment type="biophysicochemical properties">
    <kinetics>
        <KM>0.2 mM for NADP(+)</KM>
        <KM>4.76 mM for NAD(+)</KM>
    </kinetics>
</comment>
<comment type="pathway">
    <text evidence="1">One-carbon metabolism; tetrahydrofolate interconversion.</text>
</comment>
<comment type="subunit">
    <text>Homodimer.</text>
</comment>
<comment type="similarity">
    <text evidence="1">Belongs to the tetrahydrofolate dehydrogenase/cyclohydrolase family.</text>
</comment>
<reference key="1">
    <citation type="journal article" date="1996" name="Biochim. Biophys. Acta">
        <title>Methylenetetrahydrofolate dehydrogenase-cyclohydrolase from Photobacterium phosphoreum shares properties with a mammalian mitochondrial homologue.</title>
        <authorList>
            <person name="Pawelek P.D."/>
            <person name="MacKenzie R.E."/>
        </authorList>
    </citation>
    <scope>NUCLEOTIDE SEQUENCE [GENOMIC DNA]</scope>
    <scope>CHARACTERIZATION</scope>
    <source>
        <strain>DSM 2167 / CIP 104260 / LMG 4231 / NCIMB 844</strain>
    </source>
</reference>
<accession>P51696</accession>
<keyword id="KW-0028">Amino-acid biosynthesis</keyword>
<keyword id="KW-0368">Histidine biosynthesis</keyword>
<keyword id="KW-0378">Hydrolase</keyword>
<keyword id="KW-0486">Methionine biosynthesis</keyword>
<keyword id="KW-0511">Multifunctional enzyme</keyword>
<keyword id="KW-0521">NADP</keyword>
<keyword id="KW-0554">One-carbon metabolism</keyword>
<keyword id="KW-0560">Oxidoreductase</keyword>
<keyword id="KW-0658">Purine biosynthesis</keyword>
<evidence type="ECO:0000255" key="1">
    <source>
        <dbReference type="HAMAP-Rule" id="MF_01576"/>
    </source>
</evidence>
<proteinExistence type="evidence at protein level"/>
<name>FOLD_PHOPO</name>
<sequence length="285" mass="30776">MSAQIIDGKIISQTVRQEVAARVKARTDAGLRAPGLAVVLVGQDPASQIYVGSKRKACEEVGFISKSFDLPSSASEQQLLDLIDELNQDPTMDGILVQLPLPAGMDCTRILERIDPEKDVDGFHPYNVGRLSQRIPKLRSCTPKGIITLLERYNIEVRGKHAVIVGASNIVGRPMTLELLLAGATTTTCHRFTQDLEGHIRQADILVVAVGKPNFIPGGWIKEGATVIDVGINRLENGKLCGDVEFDVACQRAKYITPVPGGVGPMTVASLIENTLLACEQYHSA</sequence>